<organism>
    <name type="scientific">Streptococcus pneumoniae (strain 70585)</name>
    <dbReference type="NCBI Taxonomy" id="488221"/>
    <lineage>
        <taxon>Bacteria</taxon>
        <taxon>Bacillati</taxon>
        <taxon>Bacillota</taxon>
        <taxon>Bacilli</taxon>
        <taxon>Lactobacillales</taxon>
        <taxon>Streptococcaceae</taxon>
        <taxon>Streptococcus</taxon>
    </lineage>
</organism>
<evidence type="ECO:0000255" key="1">
    <source>
        <dbReference type="HAMAP-Rule" id="MF_00363"/>
    </source>
</evidence>
<reference key="1">
    <citation type="journal article" date="2010" name="Genome Biol.">
        <title>Structure and dynamics of the pan-genome of Streptococcus pneumoniae and closely related species.</title>
        <authorList>
            <person name="Donati C."/>
            <person name="Hiller N.L."/>
            <person name="Tettelin H."/>
            <person name="Muzzi A."/>
            <person name="Croucher N.J."/>
            <person name="Angiuoli S.V."/>
            <person name="Oggioni M."/>
            <person name="Dunning Hotopp J.C."/>
            <person name="Hu F.Z."/>
            <person name="Riley D.R."/>
            <person name="Covacci A."/>
            <person name="Mitchell T.J."/>
            <person name="Bentley S.D."/>
            <person name="Kilian M."/>
            <person name="Ehrlich G.D."/>
            <person name="Rappuoli R."/>
            <person name="Moxon E.R."/>
            <person name="Masignani V."/>
        </authorList>
    </citation>
    <scope>NUCLEOTIDE SEQUENCE [LARGE SCALE GENOMIC DNA]</scope>
    <source>
        <strain>70585</strain>
    </source>
</reference>
<sequence>MDLLLAIVLIVLAFLGGALGGMYLVRKQIEKEFADNPRLNAEAVRTLLSANGQKPSEAKVQQVYHQIIRQQKAALANNKKKK</sequence>
<keyword id="KW-1003">Cell membrane</keyword>
<keyword id="KW-0472">Membrane</keyword>
<keyword id="KW-0812">Transmembrane</keyword>
<keyword id="KW-1133">Transmembrane helix</keyword>
<proteinExistence type="inferred from homology"/>
<dbReference type="EMBL" id="CP000918">
    <property type="protein sequence ID" value="ACO17989.1"/>
    <property type="molecule type" value="Genomic_DNA"/>
</dbReference>
<dbReference type="RefSeq" id="WP_000364990.1">
    <property type="nucleotide sequence ID" value="NC_012468.1"/>
</dbReference>
<dbReference type="SMR" id="C1C9E8"/>
<dbReference type="KEGG" id="snm:SP70585_1937"/>
<dbReference type="HOGENOM" id="CLU_180108_0_0_9"/>
<dbReference type="Proteomes" id="UP000002211">
    <property type="component" value="Chromosome"/>
</dbReference>
<dbReference type="GO" id="GO:0005886">
    <property type="term" value="C:plasma membrane"/>
    <property type="evidence" value="ECO:0007669"/>
    <property type="project" value="UniProtKB-SubCell"/>
</dbReference>
<dbReference type="HAMAP" id="MF_00363">
    <property type="entry name" value="UPF0154"/>
    <property type="match status" value="1"/>
</dbReference>
<dbReference type="InterPro" id="IPR005359">
    <property type="entry name" value="UPF0154"/>
</dbReference>
<dbReference type="Pfam" id="PF03672">
    <property type="entry name" value="UPF0154"/>
    <property type="match status" value="1"/>
</dbReference>
<comment type="subcellular location">
    <subcellularLocation>
        <location evidence="1">Cell membrane</location>
        <topology evidence="1">Single-pass membrane protein</topology>
    </subcellularLocation>
</comment>
<comment type="similarity">
    <text evidence="1">Belongs to the UPF0154 family.</text>
</comment>
<name>Y1937_STRP7</name>
<feature type="chain" id="PRO_1000197730" description="UPF0154 protein SP70585_1937">
    <location>
        <begin position="1"/>
        <end position="82"/>
    </location>
</feature>
<feature type="transmembrane region" description="Helical" evidence="1">
    <location>
        <begin position="5"/>
        <end position="25"/>
    </location>
</feature>
<protein>
    <recommendedName>
        <fullName evidence="1">UPF0154 protein SP70585_1937</fullName>
    </recommendedName>
</protein>
<accession>C1C9E8</accession>
<gene>
    <name type="ordered locus">SP70585_1937</name>
</gene>